<sequence>MQTSPDMFINRELSWLRFNSRVLDQCSKNLPLLEKLKFIAIYCTNLDEFYMIRVAGLKQLFSAGVNASSSDEMTPLQQLKAIRKYLHQEKELLERYFNEITSELEKENLFIKHYENLDENLKQKCDEYFFSNIFPVIVPIAVDATHPFPHLNNLSFSLAVKICDKAHPELVKFGMIRIPRVLPRFYEVSANIYVPIESIVHQHAEEIFPGYKLLASAAFRVTRNADMVIEEEEADDFMMILEQGLKLRRKGAFVRLQIQKDADEQIVEFLNTHMKIFHKDVYEYSILLNLPSLWQIAGNKTFTHLLSPLYTPKTLPPFDENLSIFDAVEKEDILIIQPFESFDPVYKFIKEASKDPEVISIRMTLYRVEKNSNIVQALIDAASDGKQVTVMVELKARFDEENNLHWAKALENAGAHVIYGITGFKVHAKVSQVIRKQGDKLKFYMHLSTGNYNASSAKIYTDVSYFTSKAEFARDTTSFFHILSGFSKNRRLQTLSMSPNQIKEKVLEMIRIETSKKNEGVIVAKMNSLVDSDIIQALYEASMEGVQIDLIIRGICCLKPDEEYSKNIRVRSIIGKYLEHARVFYFKHSEPNYFISSADWMPRNLERRLELMTPIYDERSKAKLAQFLRLQLSDNVLAYELKNNGEYEKIPSSEKIIDSQQTLEEYVSKIYKTLKKDTDQSRATHLASKLFKEN</sequence>
<reference key="1">
    <citation type="submission" date="2006-12" db="EMBL/GenBank/DDBJ databases">
        <authorList>
            <person name="Fouts D.E."/>
            <person name="Nelson K.E."/>
            <person name="Sebastian Y."/>
        </authorList>
    </citation>
    <scope>NUCLEOTIDE SEQUENCE [LARGE SCALE GENOMIC DNA]</scope>
    <source>
        <strain>81-176</strain>
    </source>
</reference>
<keyword id="KW-0067">ATP-binding</keyword>
<keyword id="KW-0418">Kinase</keyword>
<keyword id="KW-0460">Magnesium</keyword>
<keyword id="KW-0479">Metal-binding</keyword>
<keyword id="KW-0547">Nucleotide-binding</keyword>
<keyword id="KW-0597">Phosphoprotein</keyword>
<keyword id="KW-0808">Transferase</keyword>
<gene>
    <name evidence="1" type="primary">ppk</name>
    <name type="ordered locus">CJJ81176_1361</name>
</gene>
<evidence type="ECO:0000255" key="1">
    <source>
        <dbReference type="HAMAP-Rule" id="MF_00347"/>
    </source>
</evidence>
<accession>A1W0X7</accession>
<proteinExistence type="inferred from homology"/>
<protein>
    <recommendedName>
        <fullName evidence="1">Polyphosphate kinase</fullName>
        <ecNumber evidence="1">2.7.4.1</ecNumber>
    </recommendedName>
    <alternativeName>
        <fullName evidence="1">ATP-polyphosphate phosphotransferase</fullName>
    </alternativeName>
    <alternativeName>
        <fullName evidence="1">Polyphosphoric acid kinase</fullName>
    </alternativeName>
</protein>
<name>PPK1_CAMJJ</name>
<organism>
    <name type="scientific">Campylobacter jejuni subsp. jejuni serotype O:23/36 (strain 81-176)</name>
    <dbReference type="NCBI Taxonomy" id="354242"/>
    <lineage>
        <taxon>Bacteria</taxon>
        <taxon>Pseudomonadati</taxon>
        <taxon>Campylobacterota</taxon>
        <taxon>Epsilonproteobacteria</taxon>
        <taxon>Campylobacterales</taxon>
        <taxon>Campylobacteraceae</taxon>
        <taxon>Campylobacter</taxon>
    </lineage>
</organism>
<dbReference type="EC" id="2.7.4.1" evidence="1"/>
<dbReference type="EMBL" id="CP000538">
    <property type="protein sequence ID" value="EAQ72926.1"/>
    <property type="molecule type" value="Genomic_DNA"/>
</dbReference>
<dbReference type="SMR" id="A1W0X7"/>
<dbReference type="KEGG" id="cjj:CJJ81176_1361"/>
<dbReference type="eggNOG" id="COG0855">
    <property type="taxonomic scope" value="Bacteria"/>
</dbReference>
<dbReference type="HOGENOM" id="CLU_009678_1_1_7"/>
<dbReference type="BRENDA" id="2.7.4.1">
    <property type="organism ID" value="1087"/>
</dbReference>
<dbReference type="Proteomes" id="UP000000646">
    <property type="component" value="Chromosome"/>
</dbReference>
<dbReference type="GO" id="GO:0009358">
    <property type="term" value="C:polyphosphate kinase complex"/>
    <property type="evidence" value="ECO:0007669"/>
    <property type="project" value="InterPro"/>
</dbReference>
<dbReference type="GO" id="GO:0005524">
    <property type="term" value="F:ATP binding"/>
    <property type="evidence" value="ECO:0007669"/>
    <property type="project" value="UniProtKB-KW"/>
</dbReference>
<dbReference type="GO" id="GO:0046872">
    <property type="term" value="F:metal ion binding"/>
    <property type="evidence" value="ECO:0007669"/>
    <property type="project" value="UniProtKB-KW"/>
</dbReference>
<dbReference type="GO" id="GO:0008976">
    <property type="term" value="F:polyphosphate kinase activity"/>
    <property type="evidence" value="ECO:0007669"/>
    <property type="project" value="UniProtKB-UniRule"/>
</dbReference>
<dbReference type="GO" id="GO:0006799">
    <property type="term" value="P:polyphosphate biosynthetic process"/>
    <property type="evidence" value="ECO:0007669"/>
    <property type="project" value="UniProtKB-UniRule"/>
</dbReference>
<dbReference type="CDD" id="cd09165">
    <property type="entry name" value="PLDc_PaPPK1_C1_like"/>
    <property type="match status" value="1"/>
</dbReference>
<dbReference type="CDD" id="cd09168">
    <property type="entry name" value="PLDc_PaPPK1_C2_like"/>
    <property type="match status" value="1"/>
</dbReference>
<dbReference type="Gene3D" id="3.30.870.10">
    <property type="entry name" value="Endonuclease Chain A"/>
    <property type="match status" value="2"/>
</dbReference>
<dbReference type="Gene3D" id="3.30.1840.10">
    <property type="entry name" value="Polyphosphate kinase middle domain"/>
    <property type="match status" value="1"/>
</dbReference>
<dbReference type="Gene3D" id="1.20.58.310">
    <property type="entry name" value="Polyphosphate kinase N-terminal domain"/>
    <property type="match status" value="1"/>
</dbReference>
<dbReference type="HAMAP" id="MF_00347">
    <property type="entry name" value="Polyphosphate_kinase"/>
    <property type="match status" value="1"/>
</dbReference>
<dbReference type="InterPro" id="IPR003414">
    <property type="entry name" value="PP_kinase"/>
</dbReference>
<dbReference type="InterPro" id="IPR041108">
    <property type="entry name" value="PP_kinase_C_1"/>
</dbReference>
<dbReference type="InterPro" id="IPR024953">
    <property type="entry name" value="PP_kinase_middle"/>
</dbReference>
<dbReference type="InterPro" id="IPR036830">
    <property type="entry name" value="PP_kinase_middle_dom_sf"/>
</dbReference>
<dbReference type="InterPro" id="IPR025200">
    <property type="entry name" value="PPK_C_dom2"/>
</dbReference>
<dbReference type="InterPro" id="IPR025198">
    <property type="entry name" value="PPK_N_dom"/>
</dbReference>
<dbReference type="InterPro" id="IPR036832">
    <property type="entry name" value="PPK_N_dom_sf"/>
</dbReference>
<dbReference type="NCBIfam" id="TIGR03705">
    <property type="entry name" value="poly_P_kin"/>
    <property type="match status" value="1"/>
</dbReference>
<dbReference type="NCBIfam" id="NF003921">
    <property type="entry name" value="PRK05443.2-2"/>
    <property type="match status" value="1"/>
</dbReference>
<dbReference type="NCBIfam" id="NF003924">
    <property type="entry name" value="PRK05443.3-2"/>
    <property type="match status" value="1"/>
</dbReference>
<dbReference type="PANTHER" id="PTHR30218">
    <property type="entry name" value="POLYPHOSPHATE KINASE"/>
    <property type="match status" value="1"/>
</dbReference>
<dbReference type="PANTHER" id="PTHR30218:SF0">
    <property type="entry name" value="POLYPHOSPHATE KINASE"/>
    <property type="match status" value="1"/>
</dbReference>
<dbReference type="Pfam" id="PF02503">
    <property type="entry name" value="PP_kinase"/>
    <property type="match status" value="1"/>
</dbReference>
<dbReference type="Pfam" id="PF13090">
    <property type="entry name" value="PP_kinase_C"/>
    <property type="match status" value="1"/>
</dbReference>
<dbReference type="Pfam" id="PF17941">
    <property type="entry name" value="PP_kinase_C_1"/>
    <property type="match status" value="1"/>
</dbReference>
<dbReference type="Pfam" id="PF13089">
    <property type="entry name" value="PP_kinase_N"/>
    <property type="match status" value="1"/>
</dbReference>
<dbReference type="PIRSF" id="PIRSF015589">
    <property type="entry name" value="PP_kinase"/>
    <property type="match status" value="1"/>
</dbReference>
<dbReference type="SUPFAM" id="SSF56024">
    <property type="entry name" value="Phospholipase D/nuclease"/>
    <property type="match status" value="2"/>
</dbReference>
<dbReference type="SUPFAM" id="SSF143724">
    <property type="entry name" value="PHP14-like"/>
    <property type="match status" value="1"/>
</dbReference>
<dbReference type="SUPFAM" id="SSF140356">
    <property type="entry name" value="PPK N-terminal domain-like"/>
    <property type="match status" value="1"/>
</dbReference>
<comment type="function">
    <text evidence="1">Catalyzes the reversible transfer of the terminal phosphate of ATP to form a long-chain polyphosphate (polyP).</text>
</comment>
<comment type="catalytic activity">
    <reaction evidence="1">
        <text>[phosphate](n) + ATP = [phosphate](n+1) + ADP</text>
        <dbReference type="Rhea" id="RHEA:19573"/>
        <dbReference type="Rhea" id="RHEA-COMP:9859"/>
        <dbReference type="Rhea" id="RHEA-COMP:14280"/>
        <dbReference type="ChEBI" id="CHEBI:16838"/>
        <dbReference type="ChEBI" id="CHEBI:30616"/>
        <dbReference type="ChEBI" id="CHEBI:456216"/>
        <dbReference type="EC" id="2.7.4.1"/>
    </reaction>
</comment>
<comment type="cofactor">
    <cofactor evidence="1">
        <name>Mg(2+)</name>
        <dbReference type="ChEBI" id="CHEBI:18420"/>
    </cofactor>
</comment>
<comment type="PTM">
    <text evidence="1">An intermediate of this reaction is the autophosphorylated ppk in which a phosphate is covalently linked to a histidine residue through a N-P bond.</text>
</comment>
<comment type="similarity">
    <text evidence="1">Belongs to the polyphosphate kinase 1 (PPK1) family.</text>
</comment>
<feature type="chain" id="PRO_1000079361" description="Polyphosphate kinase">
    <location>
        <begin position="1"/>
        <end position="694"/>
    </location>
</feature>
<feature type="active site" description="Phosphohistidine intermediate" evidence="1">
    <location>
        <position position="427"/>
    </location>
</feature>
<feature type="binding site" evidence="1">
    <location>
        <position position="45"/>
    </location>
    <ligand>
        <name>ATP</name>
        <dbReference type="ChEBI" id="CHEBI:30616"/>
    </ligand>
</feature>
<feature type="binding site" evidence="1">
    <location>
        <position position="367"/>
    </location>
    <ligand>
        <name>Mg(2+)</name>
        <dbReference type="ChEBI" id="CHEBI:18420"/>
    </ligand>
</feature>
<feature type="binding site" evidence="1">
    <location>
        <position position="397"/>
    </location>
    <ligand>
        <name>Mg(2+)</name>
        <dbReference type="ChEBI" id="CHEBI:18420"/>
    </ligand>
</feature>
<feature type="binding site" evidence="1">
    <location>
        <position position="460"/>
    </location>
    <ligand>
        <name>ATP</name>
        <dbReference type="ChEBI" id="CHEBI:30616"/>
    </ligand>
</feature>
<feature type="binding site" evidence="1">
    <location>
        <position position="553"/>
    </location>
    <ligand>
        <name>ATP</name>
        <dbReference type="ChEBI" id="CHEBI:30616"/>
    </ligand>
</feature>
<feature type="binding site" evidence="1">
    <location>
        <position position="580"/>
    </location>
    <ligand>
        <name>ATP</name>
        <dbReference type="ChEBI" id="CHEBI:30616"/>
    </ligand>
</feature>